<protein>
    <recommendedName>
        <fullName evidence="1">Beta-galactosidase</fullName>
        <shortName evidence="1">Beta-gal</shortName>
        <ecNumber evidence="1">3.2.1.23</ecNumber>
    </recommendedName>
    <alternativeName>
        <fullName evidence="1">Lactase</fullName>
    </alternativeName>
</protein>
<keyword id="KW-0326">Glycosidase</keyword>
<keyword id="KW-0378">Hydrolase</keyword>
<keyword id="KW-0460">Magnesium</keyword>
<keyword id="KW-0479">Metal-binding</keyword>
<keyword id="KW-1185">Reference proteome</keyword>
<keyword id="KW-0915">Sodium</keyword>
<organism>
    <name type="scientific">Escherichia coli O139:H28 (strain E24377A / ETEC)</name>
    <dbReference type="NCBI Taxonomy" id="331111"/>
    <lineage>
        <taxon>Bacteria</taxon>
        <taxon>Pseudomonadati</taxon>
        <taxon>Pseudomonadota</taxon>
        <taxon>Gammaproteobacteria</taxon>
        <taxon>Enterobacterales</taxon>
        <taxon>Enterobacteriaceae</taxon>
        <taxon>Escherichia</taxon>
    </lineage>
</organism>
<proteinExistence type="inferred from homology"/>
<dbReference type="EC" id="3.2.1.23" evidence="1"/>
<dbReference type="EMBL" id="CP000800">
    <property type="protein sequence ID" value="ABV16715.1"/>
    <property type="molecule type" value="Genomic_DNA"/>
</dbReference>
<dbReference type="RefSeq" id="WP_000177919.1">
    <property type="nucleotide sequence ID" value="NC_009801.1"/>
</dbReference>
<dbReference type="SMR" id="A7ZI91"/>
<dbReference type="CAZy" id="GH2">
    <property type="family name" value="Glycoside Hydrolase Family 2"/>
</dbReference>
<dbReference type="KEGG" id="ecw:EcE24377A_0368"/>
<dbReference type="HOGENOM" id="CLU_002346_0_2_6"/>
<dbReference type="Proteomes" id="UP000001122">
    <property type="component" value="Chromosome"/>
</dbReference>
<dbReference type="GO" id="GO:0009341">
    <property type="term" value="C:beta-galactosidase complex"/>
    <property type="evidence" value="ECO:0007669"/>
    <property type="project" value="InterPro"/>
</dbReference>
<dbReference type="GO" id="GO:0004565">
    <property type="term" value="F:beta-galactosidase activity"/>
    <property type="evidence" value="ECO:0007669"/>
    <property type="project" value="UniProtKB-EC"/>
</dbReference>
<dbReference type="GO" id="GO:0030246">
    <property type="term" value="F:carbohydrate binding"/>
    <property type="evidence" value="ECO:0007669"/>
    <property type="project" value="InterPro"/>
</dbReference>
<dbReference type="GO" id="GO:0000287">
    <property type="term" value="F:magnesium ion binding"/>
    <property type="evidence" value="ECO:0007669"/>
    <property type="project" value="UniProtKB-UniRule"/>
</dbReference>
<dbReference type="GO" id="GO:0005990">
    <property type="term" value="P:lactose catabolic process"/>
    <property type="evidence" value="ECO:0007669"/>
    <property type="project" value="TreeGrafter"/>
</dbReference>
<dbReference type="FunFam" id="2.60.120.260:FF:000058">
    <property type="entry name" value="Beta-galactosidase"/>
    <property type="match status" value="1"/>
</dbReference>
<dbReference type="FunFam" id="2.60.40.10:FF:000680">
    <property type="entry name" value="Beta-galactosidase"/>
    <property type="match status" value="1"/>
</dbReference>
<dbReference type="FunFam" id="2.60.40.10:FF:000850">
    <property type="entry name" value="Beta-galactosidase"/>
    <property type="match status" value="1"/>
</dbReference>
<dbReference type="FunFam" id="2.70.98.10:FF:000006">
    <property type="entry name" value="Beta-galactosidase"/>
    <property type="match status" value="1"/>
</dbReference>
<dbReference type="FunFam" id="3.20.20.80:FF:000018">
    <property type="entry name" value="Beta-galactosidase"/>
    <property type="match status" value="1"/>
</dbReference>
<dbReference type="Gene3D" id="2.70.98.10">
    <property type="match status" value="1"/>
</dbReference>
<dbReference type="Gene3D" id="2.60.120.260">
    <property type="entry name" value="Galactose-binding domain-like"/>
    <property type="match status" value="1"/>
</dbReference>
<dbReference type="Gene3D" id="3.20.20.80">
    <property type="entry name" value="Glycosidases"/>
    <property type="match status" value="1"/>
</dbReference>
<dbReference type="Gene3D" id="2.60.40.10">
    <property type="entry name" value="Immunoglobulins"/>
    <property type="match status" value="2"/>
</dbReference>
<dbReference type="HAMAP" id="MF_01687">
    <property type="entry name" value="Beta_gal"/>
    <property type="match status" value="1"/>
</dbReference>
<dbReference type="InterPro" id="IPR004199">
    <property type="entry name" value="B-gal_small/dom_5"/>
</dbReference>
<dbReference type="InterPro" id="IPR050347">
    <property type="entry name" value="Bact_Beta-galactosidase"/>
</dbReference>
<dbReference type="InterPro" id="IPR036156">
    <property type="entry name" value="Beta-gal/glucu_dom_sf"/>
</dbReference>
<dbReference type="InterPro" id="IPR011013">
    <property type="entry name" value="Gal_mutarotase_sf_dom"/>
</dbReference>
<dbReference type="InterPro" id="IPR008979">
    <property type="entry name" value="Galactose-bd-like_sf"/>
</dbReference>
<dbReference type="InterPro" id="IPR014718">
    <property type="entry name" value="GH-type_carb-bd"/>
</dbReference>
<dbReference type="InterPro" id="IPR006101">
    <property type="entry name" value="Glyco_hydro_2"/>
</dbReference>
<dbReference type="InterPro" id="IPR023232">
    <property type="entry name" value="Glyco_hydro_2_AS"/>
</dbReference>
<dbReference type="InterPro" id="IPR023933">
    <property type="entry name" value="Glyco_hydro_2_beta_Galsidase"/>
</dbReference>
<dbReference type="InterPro" id="IPR006103">
    <property type="entry name" value="Glyco_hydro_2_cat"/>
</dbReference>
<dbReference type="InterPro" id="IPR023230">
    <property type="entry name" value="Glyco_hydro_2_CS"/>
</dbReference>
<dbReference type="InterPro" id="IPR006102">
    <property type="entry name" value="Glyco_hydro_2_Ig-like"/>
</dbReference>
<dbReference type="InterPro" id="IPR006104">
    <property type="entry name" value="Glyco_hydro_2_N"/>
</dbReference>
<dbReference type="InterPro" id="IPR017853">
    <property type="entry name" value="Glycoside_hydrolase_SF"/>
</dbReference>
<dbReference type="InterPro" id="IPR013783">
    <property type="entry name" value="Ig-like_fold"/>
</dbReference>
<dbReference type="InterPro" id="IPR032312">
    <property type="entry name" value="LacZ_4"/>
</dbReference>
<dbReference type="NCBIfam" id="NF007074">
    <property type="entry name" value="PRK09525.1"/>
    <property type="match status" value="1"/>
</dbReference>
<dbReference type="PANTHER" id="PTHR46323">
    <property type="entry name" value="BETA-GALACTOSIDASE"/>
    <property type="match status" value="1"/>
</dbReference>
<dbReference type="PANTHER" id="PTHR46323:SF2">
    <property type="entry name" value="BETA-GALACTOSIDASE"/>
    <property type="match status" value="1"/>
</dbReference>
<dbReference type="Pfam" id="PF02929">
    <property type="entry name" value="Bgal_small_N"/>
    <property type="match status" value="1"/>
</dbReference>
<dbReference type="Pfam" id="PF00703">
    <property type="entry name" value="Glyco_hydro_2"/>
    <property type="match status" value="1"/>
</dbReference>
<dbReference type="Pfam" id="PF02836">
    <property type="entry name" value="Glyco_hydro_2_C"/>
    <property type="match status" value="1"/>
</dbReference>
<dbReference type="Pfam" id="PF02837">
    <property type="entry name" value="Glyco_hydro_2_N"/>
    <property type="match status" value="1"/>
</dbReference>
<dbReference type="Pfam" id="PF16353">
    <property type="entry name" value="LacZ_4"/>
    <property type="match status" value="1"/>
</dbReference>
<dbReference type="PRINTS" id="PR00132">
    <property type="entry name" value="GLHYDRLASE2"/>
</dbReference>
<dbReference type="SMART" id="SM01038">
    <property type="entry name" value="Bgal_small_N"/>
    <property type="match status" value="1"/>
</dbReference>
<dbReference type="SUPFAM" id="SSF51445">
    <property type="entry name" value="(Trans)glycosidases"/>
    <property type="match status" value="1"/>
</dbReference>
<dbReference type="SUPFAM" id="SSF49303">
    <property type="entry name" value="beta-Galactosidase/glucuronidase domain"/>
    <property type="match status" value="2"/>
</dbReference>
<dbReference type="SUPFAM" id="SSF74650">
    <property type="entry name" value="Galactose mutarotase-like"/>
    <property type="match status" value="1"/>
</dbReference>
<dbReference type="SUPFAM" id="SSF49785">
    <property type="entry name" value="Galactose-binding domain-like"/>
    <property type="match status" value="1"/>
</dbReference>
<dbReference type="PROSITE" id="PS00719">
    <property type="entry name" value="GLYCOSYL_HYDROL_F2_1"/>
    <property type="match status" value="1"/>
</dbReference>
<dbReference type="PROSITE" id="PS00608">
    <property type="entry name" value="GLYCOSYL_HYDROL_F2_2"/>
    <property type="match status" value="1"/>
</dbReference>
<gene>
    <name evidence="1" type="primary">lacZ</name>
    <name type="ordered locus">EcE24377A_0368</name>
</gene>
<sequence>MTMITDSLAVVLQRRDWENPGVTQLNRLAAHPPFASWRNSEEARTDRPSQQLRSLNGEWRFAWFPAPEAVPESWLECDLPEADTVVVPSNWQMHGYDAPIYTNVTYPITVNPPFVPTENPTGCYSLTFNVDESWLQEGQTRIIFDGVNSAFHLWCNGRWVGYGQDSRLPSEFDLSAFLRAGENRLAVMVLRWSDGSYLEDQDMWRMSGIFRDVSLLHKPTTQISDFHVATRFNDDFSRAVLEAEVQMCGELRDYLRVTVSLWQGETQVASGTAPFGGEIIDERGSYADRVTLRLNVENPKLWSAEIPNLYRAVVELHTADGTLIEAEACDVGFREVRIENGLLLLNGKPLLIRGVNRHEHHPLHGQVMDEQTMVQDILLMKQNNFNAVRCSHYPNHPLWYTLCDRYGLYVVDEANIETHGMVPMNRLTDDPRWLPAMSERVTRMVQRDRNHPSVIIWSLGNESGHGANHDALYRWIKSVDPSRPVQYEGGGADTTATDIICPMYARVDEDQPFPAVPKWSIKKWLSLPGETRPLILCEYAHAMGNSLGGFAKYWQAFRQYPRLQGGFVWDWVDQSLIKYDENGNPWSAYGGDFGDTPNDRQFCMNGLVFADRTPHPALTEAKHQQQFFQFRLSGQTIEVTSEYLFRHSDNELLHWMVALDGKPLASGEVPLDVAPQGKQLIELPELPQPESAGQLWLTVRVVQPNATAWSEAGHISAWQQWRLAENLSVTLPSASHIIPQLTTSETDFCIELGNKRWQFNRQSGLLSQMWIGDEKQLLTPLRDQFTRAPLDNDIGVSEATRIDPNAWVERWKAAGHYQAEAALLQCSADTLADAVLITTAHAWQHQGKTLFISRKTYRIDGSGQMAITVDVEVASDTPHPARIGLTCQLAQVAERVNWLGLGPQENYPDRLTAACFDRWDLPLSDMYTPYVFPSENGLRCGTRELNYGSHQWRGDFQFNISRYSQQQLMETSHRHLLHAEEGTWLNIDGFHMGIGGDDSWSPSVSAEFQLSAGRYHYQLVWCQK</sequence>
<feature type="chain" id="PRO_0000366992" description="Beta-galactosidase">
    <location>
        <begin position="1"/>
        <end position="1024"/>
    </location>
</feature>
<feature type="active site" description="Proton donor" evidence="1">
    <location>
        <position position="462"/>
    </location>
</feature>
<feature type="active site" description="Nucleophile" evidence="1">
    <location>
        <position position="538"/>
    </location>
</feature>
<feature type="binding site" evidence="1">
    <location>
        <position position="103"/>
    </location>
    <ligand>
        <name>substrate</name>
    </ligand>
</feature>
<feature type="binding site" evidence="1">
    <location>
        <position position="202"/>
    </location>
    <ligand>
        <name>Na(+)</name>
        <dbReference type="ChEBI" id="CHEBI:29101"/>
    </ligand>
</feature>
<feature type="binding site" evidence="1">
    <location>
        <position position="202"/>
    </location>
    <ligand>
        <name>substrate</name>
    </ligand>
</feature>
<feature type="binding site" evidence="1">
    <location>
        <position position="417"/>
    </location>
    <ligand>
        <name>Mg(2+)</name>
        <dbReference type="ChEBI" id="CHEBI:18420"/>
        <label>1</label>
    </ligand>
</feature>
<feature type="binding site" evidence="1">
    <location>
        <position position="419"/>
    </location>
    <ligand>
        <name>Mg(2+)</name>
        <dbReference type="ChEBI" id="CHEBI:18420"/>
        <label>1</label>
    </ligand>
</feature>
<feature type="binding site" evidence="1">
    <location>
        <position position="462"/>
    </location>
    <ligand>
        <name>Mg(2+)</name>
        <dbReference type="ChEBI" id="CHEBI:18420"/>
        <label>1</label>
    </ligand>
</feature>
<feature type="binding site" evidence="1">
    <location>
        <position position="462"/>
    </location>
    <ligand>
        <name>substrate</name>
    </ligand>
</feature>
<feature type="binding site" evidence="1">
    <location>
        <begin position="538"/>
        <end position="541"/>
    </location>
    <ligand>
        <name>substrate</name>
    </ligand>
</feature>
<feature type="binding site" evidence="1">
    <location>
        <position position="598"/>
    </location>
    <ligand>
        <name>Mg(2+)</name>
        <dbReference type="ChEBI" id="CHEBI:18420"/>
        <label>2</label>
    </ligand>
</feature>
<feature type="binding site" evidence="1">
    <location>
        <position position="602"/>
    </location>
    <ligand>
        <name>Na(+)</name>
        <dbReference type="ChEBI" id="CHEBI:29101"/>
    </ligand>
</feature>
<feature type="binding site" evidence="1">
    <location>
        <position position="605"/>
    </location>
    <ligand>
        <name>Na(+)</name>
        <dbReference type="ChEBI" id="CHEBI:29101"/>
    </ligand>
</feature>
<feature type="binding site" evidence="1">
    <location>
        <position position="605"/>
    </location>
    <ligand>
        <name>substrate</name>
    </ligand>
</feature>
<feature type="binding site" evidence="1">
    <location>
        <position position="1000"/>
    </location>
    <ligand>
        <name>substrate</name>
    </ligand>
</feature>
<feature type="site" description="Transition state stabilizer" evidence="1">
    <location>
        <position position="358"/>
    </location>
</feature>
<feature type="site" description="Transition state stabilizer" evidence="1">
    <location>
        <position position="392"/>
    </location>
</feature>
<comment type="catalytic activity">
    <reaction evidence="1">
        <text>Hydrolysis of terminal non-reducing beta-D-galactose residues in beta-D-galactosides.</text>
        <dbReference type="EC" id="3.2.1.23"/>
    </reaction>
</comment>
<comment type="cofactor">
    <cofactor evidence="1">
        <name>Mg(2+)</name>
        <dbReference type="ChEBI" id="CHEBI:18420"/>
    </cofactor>
    <text evidence="1">Binds 2 magnesium ions per monomer.</text>
</comment>
<comment type="cofactor">
    <cofactor evidence="1">
        <name>Na(+)</name>
        <dbReference type="ChEBI" id="CHEBI:29101"/>
    </cofactor>
    <text evidence="1">Binds 1 sodium ion per monomer.</text>
</comment>
<comment type="subunit">
    <text evidence="1">Homotetramer.</text>
</comment>
<comment type="similarity">
    <text evidence="1">Belongs to the glycosyl hydrolase 2 family.</text>
</comment>
<evidence type="ECO:0000255" key="1">
    <source>
        <dbReference type="HAMAP-Rule" id="MF_01687"/>
    </source>
</evidence>
<name>BGAL_ECO24</name>
<reference key="1">
    <citation type="journal article" date="2008" name="J. Bacteriol.">
        <title>The pangenome structure of Escherichia coli: comparative genomic analysis of E. coli commensal and pathogenic isolates.</title>
        <authorList>
            <person name="Rasko D.A."/>
            <person name="Rosovitz M.J."/>
            <person name="Myers G.S.A."/>
            <person name="Mongodin E.F."/>
            <person name="Fricke W.F."/>
            <person name="Gajer P."/>
            <person name="Crabtree J."/>
            <person name="Sebaihia M."/>
            <person name="Thomson N.R."/>
            <person name="Chaudhuri R."/>
            <person name="Henderson I.R."/>
            <person name="Sperandio V."/>
            <person name="Ravel J."/>
        </authorList>
    </citation>
    <scope>NUCLEOTIDE SEQUENCE [LARGE SCALE GENOMIC DNA]</scope>
    <source>
        <strain>E24377A / ETEC</strain>
    </source>
</reference>
<accession>A7ZI91</accession>